<evidence type="ECO:0000255" key="1">
    <source>
        <dbReference type="HAMAP-Rule" id="MF_00391"/>
    </source>
</evidence>
<evidence type="ECO:0000305" key="2"/>
<feature type="chain" id="PRO_1000134430" description="Large ribosomal subunit protein bL34">
    <location>
        <begin position="1"/>
        <end position="47"/>
    </location>
</feature>
<comment type="similarity">
    <text evidence="1">Belongs to the bacterial ribosomal protein bL34 family.</text>
</comment>
<organism>
    <name type="scientific">Buchnera aphidicola subsp. Acyrthosiphon pisum (strain 5A)</name>
    <dbReference type="NCBI Taxonomy" id="563178"/>
    <lineage>
        <taxon>Bacteria</taxon>
        <taxon>Pseudomonadati</taxon>
        <taxon>Pseudomonadota</taxon>
        <taxon>Gammaproteobacteria</taxon>
        <taxon>Enterobacterales</taxon>
        <taxon>Erwiniaceae</taxon>
        <taxon>Buchnera</taxon>
    </lineage>
</organism>
<keyword id="KW-0687">Ribonucleoprotein</keyword>
<keyword id="KW-0689">Ribosomal protein</keyword>
<sequence>MKRTFQPSILKRNRSHGFRIRMATKNGRYILSRRRAKLRTRLTVSSK</sequence>
<reference key="1">
    <citation type="journal article" date="2009" name="Science">
        <title>The dynamics and time scale of ongoing genomic erosion in symbiotic bacteria.</title>
        <authorList>
            <person name="Moran N.A."/>
            <person name="McLaughlin H.J."/>
            <person name="Sorek R."/>
        </authorList>
    </citation>
    <scope>NUCLEOTIDE SEQUENCE [LARGE SCALE GENOMIC DNA]</scope>
    <source>
        <strain>5A</strain>
    </source>
</reference>
<protein>
    <recommendedName>
        <fullName evidence="1">Large ribosomal subunit protein bL34</fullName>
    </recommendedName>
    <alternativeName>
        <fullName evidence="2">50S ribosomal protein L34</fullName>
    </alternativeName>
</protein>
<dbReference type="EMBL" id="CP001161">
    <property type="protein sequence ID" value="ACL30400.1"/>
    <property type="molecule type" value="Genomic_DNA"/>
</dbReference>
<dbReference type="RefSeq" id="WP_009873975.1">
    <property type="nucleotide sequence ID" value="NC_011833.1"/>
</dbReference>
<dbReference type="SMR" id="B8D8H8"/>
<dbReference type="KEGG" id="bap:BUAP5A_013"/>
<dbReference type="HOGENOM" id="CLU_129938_2_1_6"/>
<dbReference type="OrthoDB" id="9804164at2"/>
<dbReference type="Proteomes" id="UP000006904">
    <property type="component" value="Chromosome"/>
</dbReference>
<dbReference type="GO" id="GO:1990904">
    <property type="term" value="C:ribonucleoprotein complex"/>
    <property type="evidence" value="ECO:0007669"/>
    <property type="project" value="UniProtKB-KW"/>
</dbReference>
<dbReference type="GO" id="GO:0005840">
    <property type="term" value="C:ribosome"/>
    <property type="evidence" value="ECO:0007669"/>
    <property type="project" value="UniProtKB-KW"/>
</dbReference>
<dbReference type="GO" id="GO:0003735">
    <property type="term" value="F:structural constituent of ribosome"/>
    <property type="evidence" value="ECO:0007669"/>
    <property type="project" value="InterPro"/>
</dbReference>
<dbReference type="GO" id="GO:0006412">
    <property type="term" value="P:translation"/>
    <property type="evidence" value="ECO:0007669"/>
    <property type="project" value="UniProtKB-UniRule"/>
</dbReference>
<dbReference type="FunFam" id="1.10.287.3980:FF:000001">
    <property type="entry name" value="Mitochondrial ribosomal protein L34"/>
    <property type="match status" value="1"/>
</dbReference>
<dbReference type="Gene3D" id="1.10.287.3980">
    <property type="match status" value="1"/>
</dbReference>
<dbReference type="HAMAP" id="MF_00391">
    <property type="entry name" value="Ribosomal_bL34"/>
    <property type="match status" value="1"/>
</dbReference>
<dbReference type="InterPro" id="IPR000271">
    <property type="entry name" value="Ribosomal_bL34"/>
</dbReference>
<dbReference type="InterPro" id="IPR020939">
    <property type="entry name" value="Ribosomal_bL34_CS"/>
</dbReference>
<dbReference type="NCBIfam" id="TIGR01030">
    <property type="entry name" value="rpmH_bact"/>
    <property type="match status" value="1"/>
</dbReference>
<dbReference type="PANTHER" id="PTHR14503:SF4">
    <property type="entry name" value="LARGE RIBOSOMAL SUBUNIT PROTEIN BL34M"/>
    <property type="match status" value="1"/>
</dbReference>
<dbReference type="PANTHER" id="PTHR14503">
    <property type="entry name" value="MITOCHONDRIAL RIBOSOMAL PROTEIN 34 FAMILY MEMBER"/>
    <property type="match status" value="1"/>
</dbReference>
<dbReference type="Pfam" id="PF00468">
    <property type="entry name" value="Ribosomal_L34"/>
    <property type="match status" value="1"/>
</dbReference>
<dbReference type="PROSITE" id="PS00784">
    <property type="entry name" value="RIBOSOMAL_L34"/>
    <property type="match status" value="1"/>
</dbReference>
<name>RL34_BUCA5</name>
<proteinExistence type="inferred from homology"/>
<gene>
    <name evidence="1" type="primary">rpmH</name>
    <name type="ordered locus">BUAP5A_013</name>
</gene>
<accession>B8D8H8</accession>